<protein>
    <recommendedName>
        <fullName>Hepatoma-derived growth factor</fullName>
        <shortName>HDGF</shortName>
    </recommendedName>
</protein>
<sequence>MSRSNRQKEYKCGDLVFAKMKGYPHWPARIDEMPEAAVKSTANKYQVFFFGTHETAFLGPKDLFPYEESKEKFGKPNKRKGFSEGLWEIENNPTVKASGYQSSQKKSCVEEPEPEPEATEGDGDKKGNAEGSSDEEGKLVIDEPTKEKNEKGALKRRAGDLLEDSPKRPKEAEDLEGEEKEGATLEGERPLPVEAEKNSTPSEPGSGRGPPQEEEEEEEEEEAAKEDAEAPGLRDHESL</sequence>
<name>HDGF_BOVIN</name>
<feature type="chain" id="PRO_0000191699" description="Hepatoma-derived growth factor">
    <location>
        <begin position="1"/>
        <end position="239"/>
    </location>
</feature>
<feature type="domain" description="PWWP" evidence="5">
    <location>
        <begin position="12"/>
        <end position="69"/>
    </location>
</feature>
<feature type="region of interest" description="Disordered" evidence="6">
    <location>
        <begin position="69"/>
        <end position="239"/>
    </location>
</feature>
<feature type="short sequence motif" description="Nuclear localization signal" evidence="1">
    <location>
        <begin position="75"/>
        <end position="80"/>
    </location>
</feature>
<feature type="short sequence motif" description="Bipartite nuclear localization signal" evidence="1">
    <location>
        <begin position="155"/>
        <end position="170"/>
    </location>
</feature>
<feature type="compositionally biased region" description="Polar residues" evidence="6">
    <location>
        <begin position="91"/>
        <end position="106"/>
    </location>
</feature>
<feature type="compositionally biased region" description="Acidic residues" evidence="6">
    <location>
        <begin position="110"/>
        <end position="121"/>
    </location>
</feature>
<feature type="compositionally biased region" description="Basic and acidic residues" evidence="6">
    <location>
        <begin position="135"/>
        <end position="172"/>
    </location>
</feature>
<feature type="compositionally biased region" description="Basic and acidic residues" evidence="6">
    <location>
        <begin position="180"/>
        <end position="197"/>
    </location>
</feature>
<feature type="compositionally biased region" description="Acidic residues" evidence="6">
    <location>
        <begin position="212"/>
        <end position="224"/>
    </location>
</feature>
<feature type="compositionally biased region" description="Basic and acidic residues" evidence="6">
    <location>
        <begin position="225"/>
        <end position="239"/>
    </location>
</feature>
<feature type="binding site" evidence="1">
    <location>
        <position position="19"/>
    </location>
    <ligand>
        <name>heparin</name>
        <dbReference type="ChEBI" id="CHEBI:28304"/>
    </ligand>
</feature>
<feature type="binding site" evidence="1">
    <location>
        <position position="21"/>
    </location>
    <ligand>
        <name>heparin</name>
        <dbReference type="ChEBI" id="CHEBI:28304"/>
    </ligand>
</feature>
<feature type="binding site" evidence="1">
    <location>
        <position position="72"/>
    </location>
    <ligand>
        <name>heparin</name>
        <dbReference type="ChEBI" id="CHEBI:28304"/>
    </ligand>
</feature>
<feature type="binding site" evidence="1">
    <location>
        <position position="75"/>
    </location>
    <ligand>
        <name>heparin</name>
        <dbReference type="ChEBI" id="CHEBI:28304"/>
    </ligand>
</feature>
<feature type="binding site" evidence="1">
    <location>
        <position position="79"/>
    </location>
    <ligand>
        <name>heparin</name>
        <dbReference type="ChEBI" id="CHEBI:28304"/>
    </ligand>
</feature>
<feature type="binding site" evidence="1">
    <location>
        <position position="80"/>
    </location>
    <ligand>
        <name>heparin</name>
        <dbReference type="ChEBI" id="CHEBI:28304"/>
    </ligand>
</feature>
<feature type="modified residue" description="N6-acetyllysine" evidence="2">
    <location>
        <position position="44"/>
    </location>
</feature>
<feature type="modified residue" description="Phosphoserine" evidence="2">
    <location>
        <position position="132"/>
    </location>
</feature>
<feature type="modified residue" description="Phosphoserine" evidence="2">
    <location>
        <position position="133"/>
    </location>
</feature>
<feature type="modified residue" description="Phosphoserine" evidence="2">
    <location>
        <position position="165"/>
    </location>
</feature>
<feature type="modified residue" description="Phosphothreonine" evidence="2">
    <location>
        <position position="184"/>
    </location>
</feature>
<feature type="modified residue" description="Phosphoserine" evidence="4">
    <location>
        <position position="199"/>
    </location>
</feature>
<feature type="modified residue" description="Phosphothreonine" evidence="2">
    <location>
        <position position="200"/>
    </location>
</feature>
<feature type="modified residue" description="Phosphoserine" evidence="2">
    <location>
        <position position="202"/>
    </location>
</feature>
<feature type="modified residue" description="Phosphoserine" evidence="2">
    <location>
        <position position="206"/>
    </location>
</feature>
<feature type="modified residue" description="Phosphoserine" evidence="2">
    <location>
        <position position="238"/>
    </location>
</feature>
<feature type="disulfide bond" evidence="3">
    <location>
        <begin position="12"/>
        <end position="108"/>
    </location>
</feature>
<feature type="cross-link" description="Glycyl lysine isopeptide (Lys-Gly) (interchain with G-Cter in SUMO); alternate" evidence="1">
    <location>
        <position position="80"/>
    </location>
</feature>
<feature type="cross-link" description="Glycyl lysine isopeptide (Lys-Gly) (interchain with G-Cter in SUMO2); alternate" evidence="2">
    <location>
        <position position="80"/>
    </location>
</feature>
<comment type="function">
    <text evidence="2">Acts as a transcriptional repressor (By similarity). Has mitogenic activity for fibroblasts (By similarity). Heparin-binding protein (By similarity).</text>
</comment>
<comment type="subunit">
    <text evidence="2">Monomer, and domain-swapped homodimer (By similarity). Interacts with nuclear proteins NCL and YBX1/YB1 (By similarity).</text>
</comment>
<comment type="subcellular location">
    <subcellularLocation>
        <location evidence="2">Nucleus</location>
    </subcellularLocation>
    <subcellularLocation>
        <location evidence="2">Cytoplasm</location>
    </subcellularLocation>
    <subcellularLocation>
        <location evidence="2">Secreted</location>
        <location evidence="2">Extracellular exosome</location>
    </subcellularLocation>
    <text evidence="2">Secreted by exosomes and is located inside the exosome (By similarity). May also be secreted as free protein via an as yet unknown pathway (By similarity).</text>
</comment>
<comment type="domain">
    <text evidence="2">The PWWP domain harbors the heparin-binding sites and is responsible for DNA-binding, while the C-terminal region is essentially unstructured.</text>
</comment>
<comment type="domain">
    <text evidence="2 3">The N-terminal region does not contain a typical signal sequence but is required for secretion (By similarity). It also determines exosomal location (By similarity).</text>
</comment>
<comment type="PTM">
    <text evidence="2">Sumoylated with SUMO1. Sumoylation prevents binding to chromatin.</text>
</comment>
<comment type="PTM">
    <text evidence="3">Phosphorylation at Ser-165 is likely to be required for secretion.</text>
</comment>
<comment type="similarity">
    <text evidence="7">Belongs to the HDGF family.</text>
</comment>
<keyword id="KW-0007">Acetylation</keyword>
<keyword id="KW-0963">Cytoplasm</keyword>
<keyword id="KW-1015">Disulfide bond</keyword>
<keyword id="KW-0238">DNA-binding</keyword>
<keyword id="KW-0339">Growth factor</keyword>
<keyword id="KW-0358">Heparin-binding</keyword>
<keyword id="KW-1017">Isopeptide bond</keyword>
<keyword id="KW-0547">Nucleotide-binding</keyword>
<keyword id="KW-0539">Nucleus</keyword>
<keyword id="KW-0597">Phosphoprotein</keyword>
<keyword id="KW-1185">Reference proteome</keyword>
<keyword id="KW-0678">Repressor</keyword>
<keyword id="KW-0964">Secreted</keyword>
<keyword id="KW-0804">Transcription</keyword>
<keyword id="KW-0805">Transcription regulation</keyword>
<keyword id="KW-0832">Ubl conjugation</keyword>
<reference key="1">
    <citation type="submission" date="1999-04" db="EMBL/GenBank/DDBJ databases">
        <title>HRP-3: a new member of the hepatoma derived growth factor related protein family interacts with HDGF and another HDGF related polypeptide.</title>
        <authorList>
            <person name="Dietz F."/>
            <person name="Nakamura H."/>
            <person name="Gieselmann V."/>
        </authorList>
    </citation>
    <scope>NUCLEOTIDE SEQUENCE [MRNA]</scope>
    <source>
        <tissue>Testis</tissue>
    </source>
</reference>
<accession>Q9XSK7</accession>
<evidence type="ECO:0000250" key="1"/>
<evidence type="ECO:0000250" key="2">
    <source>
        <dbReference type="UniProtKB" id="P51858"/>
    </source>
</evidence>
<evidence type="ECO:0000250" key="3">
    <source>
        <dbReference type="UniProtKB" id="P51859"/>
    </source>
</evidence>
<evidence type="ECO:0000250" key="4">
    <source>
        <dbReference type="UniProtKB" id="Q8VHK7"/>
    </source>
</evidence>
<evidence type="ECO:0000255" key="5">
    <source>
        <dbReference type="PROSITE-ProRule" id="PRU00162"/>
    </source>
</evidence>
<evidence type="ECO:0000256" key="6">
    <source>
        <dbReference type="SAM" id="MobiDB-lite"/>
    </source>
</evidence>
<evidence type="ECO:0000305" key="7"/>
<gene>
    <name type="primary">HDGF</name>
</gene>
<organism>
    <name type="scientific">Bos taurus</name>
    <name type="common">Bovine</name>
    <dbReference type="NCBI Taxonomy" id="9913"/>
    <lineage>
        <taxon>Eukaryota</taxon>
        <taxon>Metazoa</taxon>
        <taxon>Chordata</taxon>
        <taxon>Craniata</taxon>
        <taxon>Vertebrata</taxon>
        <taxon>Euteleostomi</taxon>
        <taxon>Mammalia</taxon>
        <taxon>Eutheria</taxon>
        <taxon>Laurasiatheria</taxon>
        <taxon>Artiodactyla</taxon>
        <taxon>Ruminantia</taxon>
        <taxon>Pecora</taxon>
        <taxon>Bovidae</taxon>
        <taxon>Bovinae</taxon>
        <taxon>Bos</taxon>
    </lineage>
</organism>
<dbReference type="EMBL" id="AJ237996">
    <property type="protein sequence ID" value="CAB40626.1"/>
    <property type="molecule type" value="mRNA"/>
</dbReference>
<dbReference type="RefSeq" id="NP_787026.1">
    <property type="nucleotide sequence ID" value="NM_175832.2"/>
</dbReference>
<dbReference type="RefSeq" id="XP_015317502.1">
    <property type="nucleotide sequence ID" value="XM_015462016.1"/>
</dbReference>
<dbReference type="BMRB" id="Q9XSK7"/>
<dbReference type="SMR" id="Q9XSK7"/>
<dbReference type="FunCoup" id="Q9XSK7">
    <property type="interactions" value="2386"/>
</dbReference>
<dbReference type="STRING" id="9913.ENSBTAP00000063096"/>
<dbReference type="iPTMnet" id="Q9XSK7"/>
<dbReference type="PaxDb" id="9913-ENSBTAP00000008609"/>
<dbReference type="PeptideAtlas" id="Q9XSK7"/>
<dbReference type="Ensembl" id="ENSBTAT00000008609.6">
    <property type="protein sequence ID" value="ENSBTAP00000008609.6"/>
    <property type="gene ID" value="ENSBTAG00000039793.4"/>
</dbReference>
<dbReference type="GeneID" id="327953"/>
<dbReference type="KEGG" id="bta:327953"/>
<dbReference type="CTD" id="3068"/>
<dbReference type="VEuPathDB" id="HostDB:ENSBTAG00000039793"/>
<dbReference type="VGNC" id="VGNC:29787">
    <property type="gene designation" value="HDGF"/>
</dbReference>
<dbReference type="eggNOG" id="KOG1904">
    <property type="taxonomic scope" value="Eukaryota"/>
</dbReference>
<dbReference type="GeneTree" id="ENSGT00940000157485"/>
<dbReference type="InParanoid" id="Q9XSK7"/>
<dbReference type="OrthoDB" id="62853at2759"/>
<dbReference type="Proteomes" id="UP000009136">
    <property type="component" value="Chromosome 3"/>
</dbReference>
<dbReference type="Bgee" id="ENSBTAG00000039793">
    <property type="expression patterns" value="Expressed in esophagus and 105 other cell types or tissues"/>
</dbReference>
<dbReference type="GO" id="GO:0005737">
    <property type="term" value="C:cytoplasm"/>
    <property type="evidence" value="ECO:0007669"/>
    <property type="project" value="UniProtKB-SubCell"/>
</dbReference>
<dbReference type="GO" id="GO:0005615">
    <property type="term" value="C:extracellular space"/>
    <property type="evidence" value="ECO:0000250"/>
    <property type="project" value="UniProtKB"/>
</dbReference>
<dbReference type="GO" id="GO:0005634">
    <property type="term" value="C:nucleus"/>
    <property type="evidence" value="ECO:0000318"/>
    <property type="project" value="GO_Central"/>
</dbReference>
<dbReference type="GO" id="GO:0003677">
    <property type="term" value="F:DNA binding"/>
    <property type="evidence" value="ECO:0007669"/>
    <property type="project" value="UniProtKB-KW"/>
</dbReference>
<dbReference type="GO" id="GO:0008083">
    <property type="term" value="F:growth factor activity"/>
    <property type="evidence" value="ECO:0007669"/>
    <property type="project" value="UniProtKB-KW"/>
</dbReference>
<dbReference type="GO" id="GO:0008201">
    <property type="term" value="F:heparin binding"/>
    <property type="evidence" value="ECO:0000250"/>
    <property type="project" value="UniProtKB"/>
</dbReference>
<dbReference type="GO" id="GO:0000166">
    <property type="term" value="F:nucleotide binding"/>
    <property type="evidence" value="ECO:0007669"/>
    <property type="project" value="UniProtKB-KW"/>
</dbReference>
<dbReference type="GO" id="GO:0006338">
    <property type="term" value="P:chromatin remodeling"/>
    <property type="evidence" value="ECO:0000318"/>
    <property type="project" value="GO_Central"/>
</dbReference>
<dbReference type="GO" id="GO:0051781">
    <property type="term" value="P:positive regulation of cell division"/>
    <property type="evidence" value="ECO:0000250"/>
    <property type="project" value="UniProtKB"/>
</dbReference>
<dbReference type="FunFam" id="2.30.30.140:FF:000017">
    <property type="entry name" value="hepatoma-derived growth factor isoform X1"/>
    <property type="match status" value="1"/>
</dbReference>
<dbReference type="Gene3D" id="2.30.30.140">
    <property type="match status" value="1"/>
</dbReference>
<dbReference type="InterPro" id="IPR000313">
    <property type="entry name" value="PWWP_dom"/>
</dbReference>
<dbReference type="PANTHER" id="PTHR12550:SF41">
    <property type="entry name" value="HEPATOMA-DERIVED GROWTH FACTOR"/>
    <property type="match status" value="1"/>
</dbReference>
<dbReference type="PANTHER" id="PTHR12550">
    <property type="entry name" value="HEPATOMA-DERIVED GROWTH FACTOR-RELATED"/>
    <property type="match status" value="1"/>
</dbReference>
<dbReference type="Pfam" id="PF00855">
    <property type="entry name" value="PWWP"/>
    <property type="match status" value="1"/>
</dbReference>
<dbReference type="SMART" id="SM00293">
    <property type="entry name" value="PWWP"/>
    <property type="match status" value="1"/>
</dbReference>
<dbReference type="SUPFAM" id="SSF63748">
    <property type="entry name" value="Tudor/PWWP/MBT"/>
    <property type="match status" value="1"/>
</dbReference>
<dbReference type="PROSITE" id="PS50812">
    <property type="entry name" value="PWWP"/>
    <property type="match status" value="1"/>
</dbReference>
<proteinExistence type="evidence at transcript level"/>